<proteinExistence type="predicted"/>
<feature type="chain" id="PRO_0000115287" description="Uncharacterized protein US25">
    <location>
        <begin position="1"/>
        <end position="179"/>
    </location>
</feature>
<feature type="region of interest" description="Disordered" evidence="1">
    <location>
        <begin position="1"/>
        <end position="35"/>
    </location>
</feature>
<feature type="region of interest" description="Disordered" evidence="1">
    <location>
        <begin position="59"/>
        <end position="80"/>
    </location>
</feature>
<feature type="region of interest" description="Disordered" evidence="1">
    <location>
        <begin position="131"/>
        <end position="179"/>
    </location>
</feature>
<feature type="compositionally biased region" description="Polar residues" evidence="1">
    <location>
        <begin position="1"/>
        <end position="10"/>
    </location>
</feature>
<feature type="compositionally biased region" description="Basic residues" evidence="1">
    <location>
        <begin position="23"/>
        <end position="33"/>
    </location>
</feature>
<feature type="compositionally biased region" description="Basic residues" evidence="1">
    <location>
        <begin position="149"/>
        <end position="158"/>
    </location>
</feature>
<reference key="1">
    <citation type="journal article" date="1990" name="Curr. Top. Microbiol. Immunol.">
        <title>Analysis of the protein-coding content of the sequence of human cytomegalovirus strain AD169.</title>
        <authorList>
            <person name="Chee M.S."/>
            <person name="Bankier A.T."/>
            <person name="Beck S."/>
            <person name="Bohni R."/>
            <person name="Brown C.M."/>
            <person name="Cerny R."/>
            <person name="Horsnell T."/>
            <person name="Hutchison C.A. III"/>
            <person name="Kouzarides T."/>
            <person name="Martignetti J.A."/>
            <person name="Preddie E."/>
            <person name="Satchwell S.C."/>
            <person name="Tomlinson P."/>
            <person name="Weston K.M."/>
            <person name="Barrell B.G."/>
        </authorList>
    </citation>
    <scope>NUCLEOTIDE SEQUENCE [LARGE SCALE GENOMIC DNA]</scope>
</reference>
<organism>
    <name type="scientific">Human cytomegalovirus (strain AD169)</name>
    <name type="common">HHV-5</name>
    <name type="synonym">Human herpesvirus 5</name>
    <dbReference type="NCBI Taxonomy" id="10360"/>
    <lineage>
        <taxon>Viruses</taxon>
        <taxon>Duplodnaviria</taxon>
        <taxon>Heunggongvirae</taxon>
        <taxon>Peploviricota</taxon>
        <taxon>Herviviricetes</taxon>
        <taxon>Herpesvirales</taxon>
        <taxon>Orthoherpesviridae</taxon>
        <taxon>Betaherpesvirinae</taxon>
        <taxon>Cytomegalovirus</taxon>
        <taxon>Cytomegalovirus humanbeta5</taxon>
        <taxon>Human cytomegalovirus</taxon>
    </lineage>
</organism>
<evidence type="ECO:0000256" key="1">
    <source>
        <dbReference type="SAM" id="MobiDB-lite"/>
    </source>
</evidence>
<gene>
    <name type="primary">US25</name>
</gene>
<organismHost>
    <name type="scientific">Homo sapiens</name>
    <name type="common">Human</name>
    <dbReference type="NCBI Taxonomy" id="9606"/>
</organismHost>
<dbReference type="EMBL" id="X17403">
    <property type="protein sequence ID" value="CAA35292.1"/>
    <property type="molecule type" value="Genomic_DNA"/>
</dbReference>
<dbReference type="PIR" id="S09939">
    <property type="entry name" value="S09939"/>
</dbReference>
<dbReference type="Proteomes" id="UP000008991">
    <property type="component" value="Segment"/>
</dbReference>
<accession>P17145</accession>
<sequence>ATLSAGQPASLTEAEPNTEKATLHRHPAPKRRGKCSDFSPSFATLICLGLRTDLAFGPVRRNSRRSEPLSGSQPRPPIVTGETFELQVHQRFPLRHPAPAPVYTLRRPVQRACGGPIGPRELSKWMTGTAECPTVKSPHPPEQTANRRTPSRVRRSRRPSPSGSLLLATSRISKKSTCR</sequence>
<name>US25_HCMVA</name>
<protein>
    <recommendedName>
        <fullName>Uncharacterized protein US25</fullName>
    </recommendedName>
</protein>